<name>Y90B_SIRV1</name>
<dbReference type="EMBL" id="AJ414696">
    <property type="protein sequence ID" value="CAC93992.1"/>
    <property type="molecule type" value="Genomic_DNA"/>
</dbReference>
<dbReference type="EMBL" id="AJ748296">
    <property type="protein sequence ID" value="CAG38856.1"/>
    <property type="molecule type" value="Genomic_DNA"/>
</dbReference>
<dbReference type="RefSeq" id="NP_666625.1">
    <property type="nucleotide sequence ID" value="NC_004087.1"/>
</dbReference>
<dbReference type="SMR" id="Q8QL19"/>
<dbReference type="KEGG" id="vg:951373"/>
<dbReference type="OrthoDB" id="23260at10239"/>
<dbReference type="Proteomes" id="UP000002270">
    <property type="component" value="Genome"/>
</dbReference>
<dbReference type="Proteomes" id="UP000223181">
    <property type="component" value="Segment"/>
</dbReference>
<dbReference type="CDD" id="cd22267">
    <property type="entry name" value="AcrID1"/>
    <property type="match status" value="1"/>
</dbReference>
<dbReference type="Gene3D" id="3.30.160.300">
    <property type="match status" value="1"/>
</dbReference>
<dbReference type="InterPro" id="IPR009804">
    <property type="entry name" value="SIFV_Orf14"/>
</dbReference>
<dbReference type="NCBIfam" id="NF033952">
    <property type="entry name" value="AcrID1_fam"/>
    <property type="match status" value="1"/>
</dbReference>
<dbReference type="Pfam" id="PF07118">
    <property type="entry name" value="DUF1374"/>
    <property type="match status" value="1"/>
</dbReference>
<accession>Q8QL19</accession>
<accession>Q5TJ82</accession>
<proteinExistence type="predicted"/>
<sequence>MEFEELKSIVEKFFQDQTIVRMNLMLNKEIIVSYNQFEEIIKDGDLTYRYAEKNRTVDFYEYRNNIHSIINYFWKDNKVCIIEIDFWRSR</sequence>
<gene>
    <name type="ORF">90b</name>
</gene>
<protein>
    <recommendedName>
        <fullName>Uncharacterized protein 90B</fullName>
    </recommendedName>
</protein>
<organismHost>
    <name type="scientific">Saccharolobus islandicus</name>
    <name type="common">Sulfolobus islandicus</name>
    <dbReference type="NCBI Taxonomy" id="43080"/>
</organismHost>
<keyword id="KW-1185">Reference proteome</keyword>
<feature type="chain" id="PRO_0000342299" description="Uncharacterized protein 90B">
    <location>
        <begin position="1"/>
        <end position="90"/>
    </location>
</feature>
<feature type="sequence variant" description="In strain: Isolate variant XX.">
    <original>M</original>
    <variation>MVK</variation>
    <location>
        <position position="1"/>
    </location>
</feature>
<reference key="1">
    <citation type="journal article" date="2001" name="Virology">
        <title>Sequences and replication of genomes of the archaeal rudiviruses SIRV1 and SIRV2: relationships to the archaeal lipothrixvirus SIFV and some eukaryal viruses.</title>
        <authorList>
            <person name="Peng X."/>
            <person name="Blum H."/>
            <person name="She Q."/>
            <person name="Mallok S."/>
            <person name="Bruegger K."/>
            <person name="Garrett R.A."/>
            <person name="Zillig W."/>
            <person name="Prangishvili D."/>
        </authorList>
    </citation>
    <scope>NUCLEOTIDE SEQUENCE [LARGE SCALE GENOMIC DNA]</scope>
    <source>
        <strain>Isolate variant VIII</strain>
    </source>
</reference>
<reference key="2">
    <citation type="journal article" date="2004" name="Mol. Microbiol.">
        <title>Multiple variants of the archaeal DNA rudivirus SIRV1 in a single host and a novel mechanism of genomic variation.</title>
        <authorList>
            <person name="Peng X."/>
            <person name="Kessler A."/>
            <person name="Phan H."/>
            <person name="Garrett R.A."/>
            <person name="Prangishvili D."/>
        </authorList>
    </citation>
    <scope>NUCLEOTIDE SEQUENCE [LARGE SCALE GENOMIC DNA]</scope>
    <source>
        <strain>Isolate variant XX</strain>
    </source>
</reference>
<organism>
    <name type="scientific">Sulfolobus islandicus rod-shaped virus 1</name>
    <name type="common">SIRV-1</name>
    <name type="synonym">Sulfolobus virus SIRV-1</name>
    <dbReference type="NCBI Taxonomy" id="157898"/>
    <lineage>
        <taxon>Viruses</taxon>
        <taxon>Adnaviria</taxon>
        <taxon>Zilligvirae</taxon>
        <taxon>Taleaviricota</taxon>
        <taxon>Tokiviricetes</taxon>
        <taxon>Ligamenvirales</taxon>
        <taxon>Rudiviridae</taxon>
        <taxon>Icerudivirus</taxon>
        <taxon>Icerudivirus SIRV1</taxon>
    </lineage>
</organism>